<name>ILKAP_RAT</name>
<accession>Q9Z1Z6</accession>
<accession>Q6P6U8</accession>
<reference key="1">
    <citation type="journal article" date="1998" name="J. Biol. Chem.">
        <title>Cloning and characterization of a novel mammalian PP2C isozyme.</title>
        <authorList>
            <person name="Tong Y."/>
            <person name="Quirion R."/>
            <person name="Shen S.-H."/>
        </authorList>
    </citation>
    <scope>NUCLEOTIDE SEQUENCE [MRNA]</scope>
    <scope>COFACTOR</scope>
    <scope>TISSUE SPECIFICITY</scope>
    <scope>INDUCTION</scope>
    <scope>POSSIBLE FUNCTION</scope>
</reference>
<reference key="2">
    <citation type="journal article" date="2004" name="Genome Res.">
        <title>The status, quality, and expansion of the NIH full-length cDNA project: the Mammalian Gene Collection (MGC).</title>
        <authorList>
            <consortium name="The MGC Project Team"/>
        </authorList>
    </citation>
    <scope>NUCLEOTIDE SEQUENCE [LARGE SCALE MRNA]</scope>
    <source>
        <tissue>Prostate</tissue>
    </source>
</reference>
<gene>
    <name type="primary">Ilkap</name>
</gene>
<proteinExistence type="evidence at transcript level"/>
<sequence length="392" mass="42744">MDLFGDLPEPERPPRPSAGKEAQEGPVLFEDLPPTSSTDSGSGGPLLFDGLPPAGSGNSGSLATSGSQVVKNEGKGAKRKAPEEEKNGGEELVEKKVCKASSVIFGLKGYVAERKGEREEMQDAHVILNDITQECNPPSSLITRVSYFAVFDGHGGIRASKFAAQNLHQNLIRKFPKGDVISVEKTVKRCLLDTFKHTDEEFLKQASSQKPAWKDGSTATCVLAVDNILYIANLGDSRAILCRYNEESQKHAALSLSKEHNPTQYEERMRIQKAGGNVRDGRVLGVLEVSRSIGDGQYKRCGVTSVPDIRRCQLTPNDRFILLACDGLFKVFTPEEAVNFILSCLEDEKIQTREGKPAVDARYEAACNRLANKAVQRGSADNVTVMVVRIGH</sequence>
<organism>
    <name type="scientific">Rattus norvegicus</name>
    <name type="common">Rat</name>
    <dbReference type="NCBI Taxonomy" id="10116"/>
    <lineage>
        <taxon>Eukaryota</taxon>
        <taxon>Metazoa</taxon>
        <taxon>Chordata</taxon>
        <taxon>Craniata</taxon>
        <taxon>Vertebrata</taxon>
        <taxon>Euteleostomi</taxon>
        <taxon>Mammalia</taxon>
        <taxon>Eutheria</taxon>
        <taxon>Euarchontoglires</taxon>
        <taxon>Glires</taxon>
        <taxon>Rodentia</taxon>
        <taxon>Myomorpha</taxon>
        <taxon>Muroidea</taxon>
        <taxon>Muridae</taxon>
        <taxon>Murinae</taxon>
        <taxon>Rattus</taxon>
    </lineage>
</organism>
<feature type="chain" id="PRO_0000272273" description="Integrin-linked kinase-associated serine/threonine phosphatase 2C">
    <location>
        <begin position="1"/>
        <end position="392"/>
    </location>
</feature>
<feature type="domain" description="PPM-type phosphatase" evidence="3">
    <location>
        <begin position="108"/>
        <end position="390"/>
    </location>
</feature>
<feature type="region of interest" description="Disordered" evidence="4">
    <location>
        <begin position="1"/>
        <end position="91"/>
    </location>
</feature>
<feature type="compositionally biased region" description="Low complexity" evidence="4">
    <location>
        <begin position="31"/>
        <end position="40"/>
    </location>
</feature>
<feature type="compositionally biased region" description="Polar residues" evidence="4">
    <location>
        <begin position="59"/>
        <end position="70"/>
    </location>
</feature>
<feature type="compositionally biased region" description="Basic and acidic residues" evidence="4">
    <location>
        <begin position="72"/>
        <end position="91"/>
    </location>
</feature>
<feature type="binding site" evidence="1">
    <location>
        <position position="152"/>
    </location>
    <ligand>
        <name>Mn(2+)</name>
        <dbReference type="ChEBI" id="CHEBI:29035"/>
        <label>1</label>
    </ligand>
</feature>
<feature type="binding site" evidence="1">
    <location>
        <position position="152"/>
    </location>
    <ligand>
        <name>Mn(2+)</name>
        <dbReference type="ChEBI" id="CHEBI:29035"/>
        <label>2</label>
    </ligand>
</feature>
<feature type="binding site" evidence="1">
    <location>
        <position position="153"/>
    </location>
    <ligand>
        <name>Mn(2+)</name>
        <dbReference type="ChEBI" id="CHEBI:29035"/>
        <label>1</label>
    </ligand>
</feature>
<feature type="binding site" evidence="1">
    <location>
        <position position="326"/>
    </location>
    <ligand>
        <name>Mn(2+)</name>
        <dbReference type="ChEBI" id="CHEBI:29035"/>
        <label>2</label>
    </ligand>
</feature>
<feature type="binding site" evidence="1">
    <location>
        <position position="381"/>
    </location>
    <ligand>
        <name>Mn(2+)</name>
        <dbReference type="ChEBI" id="CHEBI:29035"/>
        <label>2</label>
    </ligand>
</feature>
<feature type="modified residue" description="N-acetylmethionine" evidence="2">
    <location>
        <position position="1"/>
    </location>
</feature>
<feature type="modified residue" description="N6-acetyllysine" evidence="2">
    <location>
        <position position="210"/>
    </location>
</feature>
<feature type="sequence conflict" description="In Ref. 2; AAH62010." evidence="6" ref="2">
    <original>P</original>
    <variation>A</variation>
    <location>
        <position position="13"/>
    </location>
</feature>
<dbReference type="EC" id="3.1.3.16"/>
<dbReference type="EMBL" id="AF095927">
    <property type="protein sequence ID" value="AAC97497.1"/>
    <property type="molecule type" value="mRNA"/>
</dbReference>
<dbReference type="EMBL" id="BC062010">
    <property type="protein sequence ID" value="AAH62010.1"/>
    <property type="molecule type" value="mRNA"/>
</dbReference>
<dbReference type="RefSeq" id="NP_072128.1">
    <property type="nucleotide sequence ID" value="NM_022606.1"/>
</dbReference>
<dbReference type="SMR" id="Q9Z1Z6"/>
<dbReference type="FunCoup" id="Q9Z1Z6">
    <property type="interactions" value="1991"/>
</dbReference>
<dbReference type="STRING" id="10116.ENSRNOP00000027295"/>
<dbReference type="iPTMnet" id="Q9Z1Z6"/>
<dbReference type="PhosphoSitePlus" id="Q9Z1Z6"/>
<dbReference type="jPOST" id="Q9Z1Z6"/>
<dbReference type="PaxDb" id="10116-ENSRNOP00000027295"/>
<dbReference type="GeneID" id="64538"/>
<dbReference type="KEGG" id="rno:64538"/>
<dbReference type="UCSC" id="RGD:620128">
    <property type="organism name" value="rat"/>
</dbReference>
<dbReference type="AGR" id="RGD:620128"/>
<dbReference type="CTD" id="80895"/>
<dbReference type="RGD" id="620128">
    <property type="gene designation" value="Ilkap"/>
</dbReference>
<dbReference type="eggNOG" id="KOG0698">
    <property type="taxonomic scope" value="Eukaryota"/>
</dbReference>
<dbReference type="InParanoid" id="Q9Z1Z6"/>
<dbReference type="PhylomeDB" id="Q9Z1Z6"/>
<dbReference type="TreeFam" id="TF313513"/>
<dbReference type="PRO" id="PR:Q9Z1Z6"/>
<dbReference type="Proteomes" id="UP000002494">
    <property type="component" value="Unplaced"/>
</dbReference>
<dbReference type="GO" id="GO:0005737">
    <property type="term" value="C:cytoplasm"/>
    <property type="evidence" value="ECO:0007669"/>
    <property type="project" value="UniProtKB-SubCell"/>
</dbReference>
<dbReference type="GO" id="GO:0046872">
    <property type="term" value="F:metal ion binding"/>
    <property type="evidence" value="ECO:0007669"/>
    <property type="project" value="UniProtKB-KW"/>
</dbReference>
<dbReference type="GO" id="GO:0004722">
    <property type="term" value="F:protein serine/threonine phosphatase activity"/>
    <property type="evidence" value="ECO:0000314"/>
    <property type="project" value="RGD"/>
</dbReference>
<dbReference type="GO" id="GO:0033262">
    <property type="term" value="P:regulation of nuclear cell cycle DNA replication"/>
    <property type="evidence" value="ECO:0000314"/>
    <property type="project" value="RGD"/>
</dbReference>
<dbReference type="GO" id="GO:0007165">
    <property type="term" value="P:signal transduction"/>
    <property type="evidence" value="ECO:0000318"/>
    <property type="project" value="GO_Central"/>
</dbReference>
<dbReference type="CDD" id="cd00143">
    <property type="entry name" value="PP2Cc"/>
    <property type="match status" value="1"/>
</dbReference>
<dbReference type="FunFam" id="3.60.40.10:FF:000018">
    <property type="entry name" value="Integrin-linked kinase-associated serine/threonine phosphatase 2C"/>
    <property type="match status" value="1"/>
</dbReference>
<dbReference type="Gene3D" id="3.60.40.10">
    <property type="entry name" value="PPM-type phosphatase domain"/>
    <property type="match status" value="1"/>
</dbReference>
<dbReference type="InterPro" id="IPR015655">
    <property type="entry name" value="PP2C"/>
</dbReference>
<dbReference type="InterPro" id="IPR000222">
    <property type="entry name" value="PP2C_BS"/>
</dbReference>
<dbReference type="InterPro" id="IPR036457">
    <property type="entry name" value="PPM-type-like_dom_sf"/>
</dbReference>
<dbReference type="InterPro" id="IPR001932">
    <property type="entry name" value="PPM-type_phosphatase-like_dom"/>
</dbReference>
<dbReference type="PANTHER" id="PTHR47992">
    <property type="entry name" value="PROTEIN PHOSPHATASE"/>
    <property type="match status" value="1"/>
</dbReference>
<dbReference type="Pfam" id="PF00481">
    <property type="entry name" value="PP2C"/>
    <property type="match status" value="1"/>
</dbReference>
<dbReference type="SMART" id="SM00332">
    <property type="entry name" value="PP2Cc"/>
    <property type="match status" value="1"/>
</dbReference>
<dbReference type="SUPFAM" id="SSF81606">
    <property type="entry name" value="PP2C-like"/>
    <property type="match status" value="1"/>
</dbReference>
<dbReference type="PROSITE" id="PS01032">
    <property type="entry name" value="PPM_1"/>
    <property type="match status" value="1"/>
</dbReference>
<dbReference type="PROSITE" id="PS51746">
    <property type="entry name" value="PPM_2"/>
    <property type="match status" value="1"/>
</dbReference>
<evidence type="ECO:0000250" key="1"/>
<evidence type="ECO:0000250" key="2">
    <source>
        <dbReference type="UniProtKB" id="Q9H0C8"/>
    </source>
</evidence>
<evidence type="ECO:0000255" key="3">
    <source>
        <dbReference type="PROSITE-ProRule" id="PRU01082"/>
    </source>
</evidence>
<evidence type="ECO:0000256" key="4">
    <source>
        <dbReference type="SAM" id="MobiDB-lite"/>
    </source>
</evidence>
<evidence type="ECO:0000269" key="5">
    <source>
    </source>
</evidence>
<evidence type="ECO:0000305" key="6"/>
<protein>
    <recommendedName>
        <fullName>Integrin-linked kinase-associated serine/threonine phosphatase 2C</fullName>
        <shortName>ILKAP</shortName>
        <ecNumber>3.1.3.16</ecNumber>
    </recommendedName>
    <alternativeName>
        <fullName>PP2Cdelta</fullName>
    </alternativeName>
</protein>
<comment type="function">
    <text evidence="1">Protein phosphatase that may play a role in regulation of cell cycle progression via dephosphorylation of its substrates whose appropriate phosphorylation states might be crucial for cell proliferation. Selectively associates with integrin linked kinase (ILK), to modulate cell adhesion and growth factor signaling. Inhibits the ILK-GSK3B signaling axis and may play an important role in inhibiting oncogenic transformation (By similarity).</text>
</comment>
<comment type="catalytic activity">
    <reaction>
        <text>O-phospho-L-seryl-[protein] + H2O = L-seryl-[protein] + phosphate</text>
        <dbReference type="Rhea" id="RHEA:20629"/>
        <dbReference type="Rhea" id="RHEA-COMP:9863"/>
        <dbReference type="Rhea" id="RHEA-COMP:11604"/>
        <dbReference type="ChEBI" id="CHEBI:15377"/>
        <dbReference type="ChEBI" id="CHEBI:29999"/>
        <dbReference type="ChEBI" id="CHEBI:43474"/>
        <dbReference type="ChEBI" id="CHEBI:83421"/>
        <dbReference type="EC" id="3.1.3.16"/>
    </reaction>
</comment>
<comment type="catalytic activity">
    <reaction>
        <text>O-phospho-L-threonyl-[protein] + H2O = L-threonyl-[protein] + phosphate</text>
        <dbReference type="Rhea" id="RHEA:47004"/>
        <dbReference type="Rhea" id="RHEA-COMP:11060"/>
        <dbReference type="Rhea" id="RHEA-COMP:11605"/>
        <dbReference type="ChEBI" id="CHEBI:15377"/>
        <dbReference type="ChEBI" id="CHEBI:30013"/>
        <dbReference type="ChEBI" id="CHEBI:43474"/>
        <dbReference type="ChEBI" id="CHEBI:61977"/>
        <dbReference type="EC" id="3.1.3.16"/>
    </reaction>
</comment>
<comment type="cofactor">
    <cofactor evidence="1">
        <name>Mg(2+)</name>
        <dbReference type="ChEBI" id="CHEBI:18420"/>
    </cofactor>
    <cofactor evidence="1">
        <name>Mn(2+)</name>
        <dbReference type="ChEBI" id="CHEBI:29035"/>
    </cofactor>
    <text evidence="1">Binds 2 magnesium or manganese ions per subunit.</text>
</comment>
<comment type="subunit">
    <text evidence="1">Interacts with ILK.</text>
</comment>
<comment type="subcellular location">
    <subcellularLocation>
        <location evidence="1">Cytoplasm</location>
    </subcellularLocation>
</comment>
<comment type="tissue specificity">
    <text evidence="5">Widely expressed. Highest expression observed in kidney, liver and muscle.</text>
</comment>
<comment type="induction">
    <text evidence="5">Activated in response to stress, such as the addition of ethanol to the culture medium or UV irradiation of cells. Inhibited rather than stimulated, by Magnesium.</text>
</comment>
<comment type="similarity">
    <text evidence="6">Belongs to the PP2C family.</text>
</comment>
<keyword id="KW-0007">Acetylation</keyword>
<keyword id="KW-0963">Cytoplasm</keyword>
<keyword id="KW-0378">Hydrolase</keyword>
<keyword id="KW-0460">Magnesium</keyword>
<keyword id="KW-0464">Manganese</keyword>
<keyword id="KW-0479">Metal-binding</keyword>
<keyword id="KW-0904">Protein phosphatase</keyword>
<keyword id="KW-1185">Reference proteome</keyword>